<gene>
    <name evidence="1" type="primary">rpmE</name>
    <name type="ordered locus">c4889.1</name>
</gene>
<dbReference type="EMBL" id="AE014075">
    <property type="status" value="NOT_ANNOTATED_CDS"/>
    <property type="molecule type" value="Genomic_DNA"/>
</dbReference>
<dbReference type="RefSeq" id="WP_000710769.1">
    <property type="nucleotide sequence ID" value="NZ_CP051263.1"/>
</dbReference>
<dbReference type="SMR" id="P0C076"/>
<dbReference type="GeneID" id="93777962"/>
<dbReference type="Proteomes" id="UP000001410">
    <property type="component" value="Chromosome"/>
</dbReference>
<dbReference type="GO" id="GO:1990904">
    <property type="term" value="C:ribonucleoprotein complex"/>
    <property type="evidence" value="ECO:0007669"/>
    <property type="project" value="UniProtKB-KW"/>
</dbReference>
<dbReference type="GO" id="GO:0005840">
    <property type="term" value="C:ribosome"/>
    <property type="evidence" value="ECO:0007669"/>
    <property type="project" value="UniProtKB-KW"/>
</dbReference>
<dbReference type="GO" id="GO:0046872">
    <property type="term" value="F:metal ion binding"/>
    <property type="evidence" value="ECO:0007669"/>
    <property type="project" value="UniProtKB-KW"/>
</dbReference>
<dbReference type="GO" id="GO:0019843">
    <property type="term" value="F:rRNA binding"/>
    <property type="evidence" value="ECO:0007669"/>
    <property type="project" value="UniProtKB-KW"/>
</dbReference>
<dbReference type="GO" id="GO:0003735">
    <property type="term" value="F:structural constituent of ribosome"/>
    <property type="evidence" value="ECO:0007669"/>
    <property type="project" value="InterPro"/>
</dbReference>
<dbReference type="GO" id="GO:0006412">
    <property type="term" value="P:translation"/>
    <property type="evidence" value="ECO:0007669"/>
    <property type="project" value="UniProtKB-UniRule"/>
</dbReference>
<dbReference type="FunFam" id="4.10.830.30:FF:000001">
    <property type="entry name" value="50S ribosomal protein L31"/>
    <property type="match status" value="1"/>
</dbReference>
<dbReference type="Gene3D" id="4.10.830.30">
    <property type="entry name" value="Ribosomal protein L31"/>
    <property type="match status" value="1"/>
</dbReference>
<dbReference type="HAMAP" id="MF_00501">
    <property type="entry name" value="Ribosomal_bL31_1"/>
    <property type="match status" value="1"/>
</dbReference>
<dbReference type="InterPro" id="IPR034704">
    <property type="entry name" value="Ribosomal_bL28/bL31-like_sf"/>
</dbReference>
<dbReference type="InterPro" id="IPR002150">
    <property type="entry name" value="Ribosomal_bL31"/>
</dbReference>
<dbReference type="InterPro" id="IPR027491">
    <property type="entry name" value="Ribosomal_bL31_A"/>
</dbReference>
<dbReference type="InterPro" id="IPR042105">
    <property type="entry name" value="Ribosomal_bL31_sf"/>
</dbReference>
<dbReference type="NCBIfam" id="TIGR00105">
    <property type="entry name" value="L31"/>
    <property type="match status" value="1"/>
</dbReference>
<dbReference type="NCBIfam" id="NF000612">
    <property type="entry name" value="PRK00019.1"/>
    <property type="match status" value="1"/>
</dbReference>
<dbReference type="NCBIfam" id="NF001809">
    <property type="entry name" value="PRK00528.1"/>
    <property type="match status" value="1"/>
</dbReference>
<dbReference type="PANTHER" id="PTHR33280">
    <property type="entry name" value="50S RIBOSOMAL PROTEIN L31, CHLOROPLASTIC"/>
    <property type="match status" value="1"/>
</dbReference>
<dbReference type="PANTHER" id="PTHR33280:SF6">
    <property type="entry name" value="LARGE RIBOSOMAL SUBUNIT PROTEIN BL31A"/>
    <property type="match status" value="1"/>
</dbReference>
<dbReference type="Pfam" id="PF01197">
    <property type="entry name" value="Ribosomal_L31"/>
    <property type="match status" value="1"/>
</dbReference>
<dbReference type="PRINTS" id="PR01249">
    <property type="entry name" value="RIBOSOMALL31"/>
</dbReference>
<dbReference type="SUPFAM" id="SSF143800">
    <property type="entry name" value="L28p-like"/>
    <property type="match status" value="1"/>
</dbReference>
<dbReference type="PROSITE" id="PS01143">
    <property type="entry name" value="RIBOSOMAL_L31"/>
    <property type="match status" value="1"/>
</dbReference>
<name>RL31_ECOL6</name>
<keyword id="KW-0007">Acetylation</keyword>
<keyword id="KW-0479">Metal-binding</keyword>
<keyword id="KW-1185">Reference proteome</keyword>
<keyword id="KW-0687">Ribonucleoprotein</keyword>
<keyword id="KW-0689">Ribosomal protein</keyword>
<keyword id="KW-0694">RNA-binding</keyword>
<keyword id="KW-0699">rRNA-binding</keyword>
<keyword id="KW-0862">Zinc</keyword>
<evidence type="ECO:0000255" key="1">
    <source>
        <dbReference type="HAMAP-Rule" id="MF_00501"/>
    </source>
</evidence>
<evidence type="ECO:0000305" key="2"/>
<protein>
    <recommendedName>
        <fullName evidence="1">Large ribosomal subunit protein bL31</fullName>
    </recommendedName>
    <alternativeName>
        <fullName evidence="2">50S ribosomal protein L31</fullName>
    </alternativeName>
</protein>
<sequence>MKKDIHPKYEEITASCSCGNVMKIRSTVGHDLNLDVCSKCHPFFTGKQRDVATGGRVDRFNKRFNIPGSK</sequence>
<feature type="chain" id="PRO_0000173103" description="Large ribosomal subunit protein bL31">
    <location>
        <begin position="1"/>
        <end position="70"/>
    </location>
</feature>
<feature type="binding site" evidence="1">
    <location>
        <position position="16"/>
    </location>
    <ligand>
        <name>Zn(2+)</name>
        <dbReference type="ChEBI" id="CHEBI:29105"/>
    </ligand>
</feature>
<feature type="binding site" evidence="1">
    <location>
        <position position="18"/>
    </location>
    <ligand>
        <name>Zn(2+)</name>
        <dbReference type="ChEBI" id="CHEBI:29105"/>
    </ligand>
</feature>
<feature type="binding site" evidence="1">
    <location>
        <position position="37"/>
    </location>
    <ligand>
        <name>Zn(2+)</name>
        <dbReference type="ChEBI" id="CHEBI:29105"/>
    </ligand>
</feature>
<feature type="binding site" evidence="1">
    <location>
        <position position="40"/>
    </location>
    <ligand>
        <name>Zn(2+)</name>
        <dbReference type="ChEBI" id="CHEBI:29105"/>
    </ligand>
</feature>
<feature type="modified residue" description="N6-acetyllysine" evidence="1">
    <location>
        <position position="8"/>
    </location>
</feature>
<reference key="1">
    <citation type="journal article" date="2002" name="Proc. Natl. Acad. Sci. U.S.A.">
        <title>Extensive mosaic structure revealed by the complete genome sequence of uropathogenic Escherichia coli.</title>
        <authorList>
            <person name="Welch R.A."/>
            <person name="Burland V."/>
            <person name="Plunkett G. III"/>
            <person name="Redford P."/>
            <person name="Roesch P."/>
            <person name="Rasko D."/>
            <person name="Buckles E.L."/>
            <person name="Liou S.-R."/>
            <person name="Boutin A."/>
            <person name="Hackett J."/>
            <person name="Stroud D."/>
            <person name="Mayhew G.F."/>
            <person name="Rose D.J."/>
            <person name="Zhou S."/>
            <person name="Schwartz D.C."/>
            <person name="Perna N.T."/>
            <person name="Mobley H.L.T."/>
            <person name="Donnenberg M.S."/>
            <person name="Blattner F.R."/>
        </authorList>
    </citation>
    <scope>NUCLEOTIDE SEQUENCE [LARGE SCALE GENOMIC DNA]</scope>
    <source>
        <strain>CFT073 / ATCC 700928 / UPEC</strain>
    </source>
</reference>
<accession>P0C076</accession>
<organism>
    <name type="scientific">Escherichia coli O6:H1 (strain CFT073 / ATCC 700928 / UPEC)</name>
    <dbReference type="NCBI Taxonomy" id="199310"/>
    <lineage>
        <taxon>Bacteria</taxon>
        <taxon>Pseudomonadati</taxon>
        <taxon>Pseudomonadota</taxon>
        <taxon>Gammaproteobacteria</taxon>
        <taxon>Enterobacterales</taxon>
        <taxon>Enterobacteriaceae</taxon>
        <taxon>Escherichia</taxon>
    </lineage>
</organism>
<comment type="function">
    <text evidence="1">Binds the 23S rRNA.</text>
</comment>
<comment type="cofactor">
    <cofactor evidence="1">
        <name>Zn(2+)</name>
        <dbReference type="ChEBI" id="CHEBI:29105"/>
    </cofactor>
    <text evidence="1">Binds 1 zinc ion per subunit.</text>
</comment>
<comment type="subunit">
    <text evidence="1">Part of the 50S ribosomal subunit.</text>
</comment>
<comment type="similarity">
    <text evidence="1">Belongs to the bacterial ribosomal protein bL31 family. Type A subfamily.</text>
</comment>
<proteinExistence type="inferred from homology"/>